<keyword id="KW-0002">3D-structure</keyword>
<keyword id="KW-1003">Cell membrane</keyword>
<keyword id="KW-0178">Competence</keyword>
<keyword id="KW-0449">Lipoprotein</keyword>
<keyword id="KW-0472">Membrane</keyword>
<keyword id="KW-0564">Palmitate</keyword>
<keyword id="KW-0571">Peptide transport</keyword>
<keyword id="KW-0653">Protein transport</keyword>
<keyword id="KW-1185">Reference proteome</keyword>
<keyword id="KW-0732">Signal</keyword>
<keyword id="KW-0749">Sporulation</keyword>
<keyword id="KW-0813">Transport</keyword>
<protein>
    <recommendedName>
        <fullName>Oligopeptide-binding protein AppA</fullName>
    </recommendedName>
</protein>
<comment type="function">
    <text>This protein is a component of an oligopeptide permease, a binding protein-dependent transport system. This APP system can completely substitute for the OPP system in both sporulation and genetic competence. AppA can bind and transport tetra- and pentapeptides but not tripeptides.</text>
</comment>
<comment type="subcellular location">
    <subcellularLocation>
        <location evidence="2">Cell membrane</location>
        <topology evidence="2">Lipid-anchor</topology>
    </subcellularLocation>
</comment>
<comment type="similarity">
    <text evidence="2">Belongs to the bacterial solute-binding protein 5 family.</text>
</comment>
<comment type="sequence caution" evidence="2">
    <conflict type="frameshift">
        <sequence resource="EMBL" id="AL009126"/>
    </conflict>
</comment>
<name>APPA_BACSU</name>
<sequence length="543" mass="61917">MKRRKTALMMLSVLMVLAIFLSACSGSKSSNSSAKKSAGKPQQGGDLVVGSIGEPTLFNSLYSTDDASTDIENMLYSFLTKTDEKLNVKLSLAESIKELDGGLAYDVKIKKGVKFHDGKELTADDVVFTYSVPLSKDYKGERGSTYEMLKSVEKKGDYEVLFKLKYKDGNFYNNALDSTAILPKHILGNVPIADLEENEFNRKKPIGSGPFKFKEWKQGQYIKLEANDDYFEGRPYLDTVTYKVIPDANAAVAQLQAGDINFFNVPATDYKTAEKFNNLKIVTDLALSYVYIGWNEKNELFKDKKVRQALTTALDRESIVSQVLDGDGEVAYIPESPLSWNYPKDIDVPKFEYNEKKAKQMLAEAGWKDTNGDGILDKDGKKFSFTLKTNQGNKVREDIAVVVQEQLKKIGIEVKTQIVEWSALVEQMNPPNWDFDAMVMGWSLSTFPDQYDIFHSSQIKKGLNYVWYKNAEADKLMKDAKSISDRKQYSKEYEQIYQKIAEDQPYTFLYYPNNHMAMPENLEGYKYHPKRDLYNIEKWWLAK</sequence>
<accession>P42061</accession>
<proteinExistence type="evidence at protein level"/>
<dbReference type="EMBL" id="U20909">
    <property type="protein sequence ID" value="AAA62358.1"/>
    <property type="molecule type" value="Genomic_DNA"/>
</dbReference>
<dbReference type="EMBL" id="AL009126">
    <property type="status" value="NOT_ANNOTATED_CDS"/>
    <property type="molecule type" value="Genomic_DNA"/>
</dbReference>
<dbReference type="PIR" id="I40545">
    <property type="entry name" value="I40545"/>
</dbReference>
<dbReference type="PDB" id="1XOC">
    <property type="method" value="X-ray"/>
    <property type="resolution" value="1.55 A"/>
    <property type="chains" value="A=25-543"/>
</dbReference>
<dbReference type="PDBsum" id="1XOC"/>
<dbReference type="SMR" id="P42061"/>
<dbReference type="FunCoup" id="P42061">
    <property type="interactions" value="167"/>
</dbReference>
<dbReference type="TCDB" id="3.A.1.5.20">
    <property type="family name" value="the atp-binding cassette (abc) superfamily"/>
</dbReference>
<dbReference type="InParanoid" id="P42061"/>
<dbReference type="EvolutionaryTrace" id="P42061"/>
<dbReference type="Proteomes" id="UP000001570">
    <property type="component" value="Chromosome"/>
</dbReference>
<dbReference type="GO" id="GO:0043190">
    <property type="term" value="C:ATP-binding cassette (ABC) transporter complex"/>
    <property type="evidence" value="ECO:0007669"/>
    <property type="project" value="InterPro"/>
</dbReference>
<dbReference type="GO" id="GO:0042597">
    <property type="term" value="C:periplasmic space"/>
    <property type="evidence" value="ECO:0007669"/>
    <property type="project" value="UniProtKB-ARBA"/>
</dbReference>
<dbReference type="GO" id="GO:1904680">
    <property type="term" value="F:peptide transmembrane transporter activity"/>
    <property type="evidence" value="ECO:0000318"/>
    <property type="project" value="GO_Central"/>
</dbReference>
<dbReference type="GO" id="GO:0030420">
    <property type="term" value="P:establishment of competence for transformation"/>
    <property type="evidence" value="ECO:0007669"/>
    <property type="project" value="UniProtKB-KW"/>
</dbReference>
<dbReference type="GO" id="GO:0015833">
    <property type="term" value="P:peptide transport"/>
    <property type="evidence" value="ECO:0000318"/>
    <property type="project" value="GO_Central"/>
</dbReference>
<dbReference type="GO" id="GO:0015031">
    <property type="term" value="P:protein transport"/>
    <property type="evidence" value="ECO:0007669"/>
    <property type="project" value="UniProtKB-KW"/>
</dbReference>
<dbReference type="GO" id="GO:0030435">
    <property type="term" value="P:sporulation resulting in formation of a cellular spore"/>
    <property type="evidence" value="ECO:0007669"/>
    <property type="project" value="UniProtKB-KW"/>
</dbReference>
<dbReference type="CDD" id="cd08514">
    <property type="entry name" value="PBP2_AppA_like"/>
    <property type="match status" value="1"/>
</dbReference>
<dbReference type="FunFam" id="3.10.105.10:FF:000006">
    <property type="entry name" value="Peptide ABC transporter substrate-binding protein"/>
    <property type="match status" value="1"/>
</dbReference>
<dbReference type="Gene3D" id="3.90.76.10">
    <property type="entry name" value="Dipeptide-binding Protein, Domain 1"/>
    <property type="match status" value="1"/>
</dbReference>
<dbReference type="Gene3D" id="3.10.105.10">
    <property type="entry name" value="Dipeptide-binding Protein, Domain 3"/>
    <property type="match status" value="1"/>
</dbReference>
<dbReference type="Gene3D" id="3.40.190.10">
    <property type="entry name" value="Periplasmic binding protein-like II"/>
    <property type="match status" value="1"/>
</dbReference>
<dbReference type="InterPro" id="IPR030678">
    <property type="entry name" value="Peptide/Ni-bd"/>
</dbReference>
<dbReference type="InterPro" id="IPR039424">
    <property type="entry name" value="SBP_5"/>
</dbReference>
<dbReference type="InterPro" id="IPR023765">
    <property type="entry name" value="SBP_5_CS"/>
</dbReference>
<dbReference type="InterPro" id="IPR000914">
    <property type="entry name" value="SBP_5_dom"/>
</dbReference>
<dbReference type="PANTHER" id="PTHR30290:SF9">
    <property type="entry name" value="OLIGOPEPTIDE-BINDING PROTEIN APPA"/>
    <property type="match status" value="1"/>
</dbReference>
<dbReference type="PANTHER" id="PTHR30290">
    <property type="entry name" value="PERIPLASMIC BINDING COMPONENT OF ABC TRANSPORTER"/>
    <property type="match status" value="1"/>
</dbReference>
<dbReference type="Pfam" id="PF00496">
    <property type="entry name" value="SBP_bac_5"/>
    <property type="match status" value="1"/>
</dbReference>
<dbReference type="PIRSF" id="PIRSF002741">
    <property type="entry name" value="MppA"/>
    <property type="match status" value="1"/>
</dbReference>
<dbReference type="SUPFAM" id="SSF53850">
    <property type="entry name" value="Periplasmic binding protein-like II"/>
    <property type="match status" value="1"/>
</dbReference>
<dbReference type="PROSITE" id="PS51257">
    <property type="entry name" value="PROKAR_LIPOPROTEIN"/>
    <property type="match status" value="1"/>
</dbReference>
<dbReference type="PROSITE" id="PS01040">
    <property type="entry name" value="SBP_BACTERIAL_5"/>
    <property type="match status" value="1"/>
</dbReference>
<organism>
    <name type="scientific">Bacillus subtilis (strain 168)</name>
    <dbReference type="NCBI Taxonomy" id="224308"/>
    <lineage>
        <taxon>Bacteria</taxon>
        <taxon>Bacillati</taxon>
        <taxon>Bacillota</taxon>
        <taxon>Bacilli</taxon>
        <taxon>Bacillales</taxon>
        <taxon>Bacillaceae</taxon>
        <taxon>Bacillus</taxon>
    </lineage>
</organism>
<evidence type="ECO:0000255" key="1">
    <source>
        <dbReference type="PROSITE-ProRule" id="PRU00303"/>
    </source>
</evidence>
<evidence type="ECO:0000305" key="2"/>
<evidence type="ECO:0007829" key="3">
    <source>
        <dbReference type="PDB" id="1XOC"/>
    </source>
</evidence>
<gene>
    <name type="primary">appA</name>
    <name type="ordered locus">BSU11381/BSU11382</name>
    <name type="ORF">BSU11380</name>
</gene>
<feature type="signal peptide" evidence="1">
    <location>
        <begin position="1"/>
        <end position="23"/>
    </location>
</feature>
<feature type="chain" id="PRO_0000031791" description="Oligopeptide-binding protein AppA">
    <location>
        <begin position="24"/>
        <end position="543"/>
    </location>
</feature>
<feature type="lipid moiety-binding region" description="N-palmitoyl cysteine" evidence="2">
    <location>
        <position position="24"/>
    </location>
</feature>
<feature type="lipid moiety-binding region" description="S-diacylglycerol cysteine" evidence="2">
    <location>
        <position position="24"/>
    </location>
</feature>
<feature type="sequence conflict" description="In Ref. 1; AAA62358." evidence="2" ref="1">
    <original>V</original>
    <variation>E</variation>
    <location>
        <position position="252"/>
    </location>
</feature>
<feature type="strand" evidence="3">
    <location>
        <begin position="46"/>
        <end position="53"/>
    </location>
</feature>
<feature type="turn" evidence="3">
    <location>
        <begin position="60"/>
        <end position="62"/>
    </location>
</feature>
<feature type="helix" evidence="3">
    <location>
        <begin position="66"/>
        <end position="75"/>
    </location>
</feature>
<feature type="strand" evidence="3">
    <location>
        <begin position="79"/>
        <end position="82"/>
    </location>
</feature>
<feature type="strand" evidence="3">
    <location>
        <begin position="88"/>
        <end position="99"/>
    </location>
</feature>
<feature type="helix" evidence="3">
    <location>
        <begin position="100"/>
        <end position="102"/>
    </location>
</feature>
<feature type="strand" evidence="3">
    <location>
        <begin position="104"/>
        <end position="109"/>
    </location>
</feature>
<feature type="helix" evidence="3">
    <location>
        <begin position="123"/>
        <end position="131"/>
    </location>
</feature>
<feature type="helix" evidence="3">
    <location>
        <begin position="132"/>
        <end position="134"/>
    </location>
</feature>
<feature type="helix" evidence="3">
    <location>
        <begin position="143"/>
        <end position="145"/>
    </location>
</feature>
<feature type="turn" evidence="3">
    <location>
        <begin position="146"/>
        <end position="148"/>
    </location>
</feature>
<feature type="strand" evidence="3">
    <location>
        <begin position="149"/>
        <end position="156"/>
    </location>
</feature>
<feature type="strand" evidence="3">
    <location>
        <begin position="159"/>
        <end position="166"/>
    </location>
</feature>
<feature type="helix" evidence="3">
    <location>
        <begin position="170"/>
        <end position="173"/>
    </location>
</feature>
<feature type="helix" evidence="3">
    <location>
        <begin position="175"/>
        <end position="178"/>
    </location>
</feature>
<feature type="helix" evidence="3">
    <location>
        <begin position="184"/>
        <end position="187"/>
    </location>
</feature>
<feature type="helix" evidence="3">
    <location>
        <begin position="192"/>
        <end position="194"/>
    </location>
</feature>
<feature type="turn" evidence="3">
    <location>
        <begin position="195"/>
        <end position="197"/>
    </location>
</feature>
<feature type="helix" evidence="3">
    <location>
        <begin position="199"/>
        <end position="201"/>
    </location>
</feature>
<feature type="strand" evidence="3">
    <location>
        <begin position="208"/>
        <end position="217"/>
    </location>
</feature>
<feature type="turn" evidence="3">
    <location>
        <begin position="218"/>
        <end position="220"/>
    </location>
</feature>
<feature type="strand" evidence="3">
    <location>
        <begin position="221"/>
        <end position="226"/>
    </location>
</feature>
<feature type="strand" evidence="3">
    <location>
        <begin position="236"/>
        <end position="244"/>
    </location>
</feature>
<feature type="helix" evidence="3">
    <location>
        <begin position="248"/>
        <end position="256"/>
    </location>
</feature>
<feature type="strand" evidence="3">
    <location>
        <begin position="262"/>
        <end position="264"/>
    </location>
</feature>
<feature type="helix" evidence="3">
    <location>
        <begin position="267"/>
        <end position="269"/>
    </location>
</feature>
<feature type="helix" evidence="3">
    <location>
        <begin position="270"/>
        <end position="273"/>
    </location>
</feature>
<feature type="strand" evidence="3">
    <location>
        <begin position="279"/>
        <end position="285"/>
    </location>
</feature>
<feature type="strand" evidence="3">
    <location>
        <begin position="287"/>
        <end position="294"/>
    </location>
</feature>
<feature type="helix" evidence="3">
    <location>
        <begin position="299"/>
        <end position="301"/>
    </location>
</feature>
<feature type="helix" evidence="3">
    <location>
        <begin position="304"/>
        <end position="312"/>
    </location>
</feature>
<feature type="helix" evidence="3">
    <location>
        <begin position="316"/>
        <end position="323"/>
    </location>
</feature>
<feature type="strand" evidence="3">
    <location>
        <begin position="328"/>
        <end position="330"/>
    </location>
</feature>
<feature type="strand" evidence="3">
    <location>
        <begin position="333"/>
        <end position="335"/>
    </location>
</feature>
<feature type="helix" evidence="3">
    <location>
        <begin position="355"/>
        <end position="364"/>
    </location>
</feature>
<feature type="strand" evidence="3">
    <location>
        <begin position="370"/>
        <end position="375"/>
    </location>
</feature>
<feature type="strand" evidence="3">
    <location>
        <begin position="384"/>
        <end position="390"/>
    </location>
</feature>
<feature type="helix" evidence="3">
    <location>
        <begin position="394"/>
        <end position="408"/>
    </location>
</feature>
<feature type="turn" evidence="3">
    <location>
        <begin position="409"/>
        <end position="411"/>
    </location>
</feature>
<feature type="strand" evidence="3">
    <location>
        <begin position="413"/>
        <end position="419"/>
    </location>
</feature>
<feature type="helix" evidence="3">
    <location>
        <begin position="421"/>
        <end position="428"/>
    </location>
</feature>
<feature type="turn" evidence="3">
    <location>
        <begin position="430"/>
        <end position="432"/>
    </location>
</feature>
<feature type="strand" evidence="3">
    <location>
        <begin position="436"/>
        <end position="443"/>
    </location>
</feature>
<feature type="helix" evidence="3">
    <location>
        <begin position="451"/>
        <end position="454"/>
    </location>
</feature>
<feature type="helix" evidence="3">
    <location>
        <begin position="456"/>
        <end position="458"/>
    </location>
</feature>
<feature type="turn" evidence="3">
    <location>
        <begin position="459"/>
        <end position="461"/>
    </location>
</feature>
<feature type="helix" evidence="3">
    <location>
        <begin position="471"/>
        <end position="480"/>
    </location>
</feature>
<feature type="helix" evidence="3">
    <location>
        <begin position="486"/>
        <end position="503"/>
    </location>
</feature>
<feature type="strand" evidence="3">
    <location>
        <begin position="505"/>
        <end position="511"/>
    </location>
</feature>
<feature type="strand" evidence="3">
    <location>
        <begin position="513"/>
        <end position="519"/>
    </location>
</feature>
<feature type="strand" evidence="3">
    <location>
        <begin position="522"/>
        <end position="524"/>
    </location>
</feature>
<feature type="turn" evidence="3">
    <location>
        <begin position="532"/>
        <end position="535"/>
    </location>
</feature>
<feature type="helix" evidence="3">
    <location>
        <begin position="536"/>
        <end position="538"/>
    </location>
</feature>
<reference key="1">
    <citation type="journal article" date="1994" name="Mol. Microbiol.">
        <title>Identification of a second oligopeptide transport system in Bacillus subtilis and determination of its role in sporulation.</title>
        <authorList>
            <person name="Koide A."/>
            <person name="Hoch J.A."/>
        </authorList>
    </citation>
    <scope>NUCLEOTIDE SEQUENCE [GENOMIC DNA]</scope>
    <source>
        <strain>168</strain>
    </source>
</reference>
<reference key="2">
    <citation type="journal article" date="1997" name="Nature">
        <title>The complete genome sequence of the Gram-positive bacterium Bacillus subtilis.</title>
        <authorList>
            <person name="Kunst F."/>
            <person name="Ogasawara N."/>
            <person name="Moszer I."/>
            <person name="Albertini A.M."/>
            <person name="Alloni G."/>
            <person name="Azevedo V."/>
            <person name="Bertero M.G."/>
            <person name="Bessieres P."/>
            <person name="Bolotin A."/>
            <person name="Borchert S."/>
            <person name="Borriss R."/>
            <person name="Boursier L."/>
            <person name="Brans A."/>
            <person name="Braun M."/>
            <person name="Brignell S.C."/>
            <person name="Bron S."/>
            <person name="Brouillet S."/>
            <person name="Bruschi C.V."/>
            <person name="Caldwell B."/>
            <person name="Capuano V."/>
            <person name="Carter N.M."/>
            <person name="Choi S.-K."/>
            <person name="Codani J.-J."/>
            <person name="Connerton I.F."/>
            <person name="Cummings N.J."/>
            <person name="Daniel R.A."/>
            <person name="Denizot F."/>
            <person name="Devine K.M."/>
            <person name="Duesterhoeft A."/>
            <person name="Ehrlich S.D."/>
            <person name="Emmerson P.T."/>
            <person name="Entian K.-D."/>
            <person name="Errington J."/>
            <person name="Fabret C."/>
            <person name="Ferrari E."/>
            <person name="Foulger D."/>
            <person name="Fritz C."/>
            <person name="Fujita M."/>
            <person name="Fujita Y."/>
            <person name="Fuma S."/>
            <person name="Galizzi A."/>
            <person name="Galleron N."/>
            <person name="Ghim S.-Y."/>
            <person name="Glaser P."/>
            <person name="Goffeau A."/>
            <person name="Golightly E.J."/>
            <person name="Grandi G."/>
            <person name="Guiseppi G."/>
            <person name="Guy B.J."/>
            <person name="Haga K."/>
            <person name="Haiech J."/>
            <person name="Harwood C.R."/>
            <person name="Henaut A."/>
            <person name="Hilbert H."/>
            <person name="Holsappel S."/>
            <person name="Hosono S."/>
            <person name="Hullo M.-F."/>
            <person name="Itaya M."/>
            <person name="Jones L.-M."/>
            <person name="Joris B."/>
            <person name="Karamata D."/>
            <person name="Kasahara Y."/>
            <person name="Klaerr-Blanchard M."/>
            <person name="Klein C."/>
            <person name="Kobayashi Y."/>
            <person name="Koetter P."/>
            <person name="Koningstein G."/>
            <person name="Krogh S."/>
            <person name="Kumano M."/>
            <person name="Kurita K."/>
            <person name="Lapidus A."/>
            <person name="Lardinois S."/>
            <person name="Lauber J."/>
            <person name="Lazarevic V."/>
            <person name="Lee S.-M."/>
            <person name="Levine A."/>
            <person name="Liu H."/>
            <person name="Masuda S."/>
            <person name="Mauel C."/>
            <person name="Medigue C."/>
            <person name="Medina N."/>
            <person name="Mellado R.P."/>
            <person name="Mizuno M."/>
            <person name="Moestl D."/>
            <person name="Nakai S."/>
            <person name="Noback M."/>
            <person name="Noone D."/>
            <person name="O'Reilly M."/>
            <person name="Ogawa K."/>
            <person name="Ogiwara A."/>
            <person name="Oudega B."/>
            <person name="Park S.-H."/>
            <person name="Parro V."/>
            <person name="Pohl T.M."/>
            <person name="Portetelle D."/>
            <person name="Porwollik S."/>
            <person name="Prescott A.M."/>
            <person name="Presecan E."/>
            <person name="Pujic P."/>
            <person name="Purnelle B."/>
            <person name="Rapoport G."/>
            <person name="Rey M."/>
            <person name="Reynolds S."/>
            <person name="Rieger M."/>
            <person name="Rivolta C."/>
            <person name="Rocha E."/>
            <person name="Roche B."/>
            <person name="Rose M."/>
            <person name="Sadaie Y."/>
            <person name="Sato T."/>
            <person name="Scanlan E."/>
            <person name="Schleich S."/>
            <person name="Schroeter R."/>
            <person name="Scoffone F."/>
            <person name="Sekiguchi J."/>
            <person name="Sekowska A."/>
            <person name="Seror S.J."/>
            <person name="Serror P."/>
            <person name="Shin B.-S."/>
            <person name="Soldo B."/>
            <person name="Sorokin A."/>
            <person name="Tacconi E."/>
            <person name="Takagi T."/>
            <person name="Takahashi H."/>
            <person name="Takemaru K."/>
            <person name="Takeuchi M."/>
            <person name="Tamakoshi A."/>
            <person name="Tanaka T."/>
            <person name="Terpstra P."/>
            <person name="Tognoni A."/>
            <person name="Tosato V."/>
            <person name="Uchiyama S."/>
            <person name="Vandenbol M."/>
            <person name="Vannier F."/>
            <person name="Vassarotti A."/>
            <person name="Viari A."/>
            <person name="Wambutt R."/>
            <person name="Wedler E."/>
            <person name="Wedler H."/>
            <person name="Weitzenegger T."/>
            <person name="Winters P."/>
            <person name="Wipat A."/>
            <person name="Yamamoto H."/>
            <person name="Yamane K."/>
            <person name="Yasumoto K."/>
            <person name="Yata K."/>
            <person name="Yoshida K."/>
            <person name="Yoshikawa H.-F."/>
            <person name="Zumstein E."/>
            <person name="Yoshikawa H."/>
            <person name="Danchin A."/>
        </authorList>
    </citation>
    <scope>NUCLEOTIDE SEQUENCE [LARGE SCALE GENOMIC DNA]</scope>
    <source>
        <strain>168</strain>
    </source>
</reference>